<evidence type="ECO:0000305" key="1"/>
<comment type="similarity">
    <text evidence="1">Belongs to the gns family.</text>
</comment>
<name>GNSA_ECOL6</name>
<accession>P0AC93</accession>
<accession>P52635</accession>
<organism>
    <name type="scientific">Escherichia coli O6:H1 (strain CFT073 / ATCC 700928 / UPEC)</name>
    <dbReference type="NCBI Taxonomy" id="199310"/>
    <lineage>
        <taxon>Bacteria</taxon>
        <taxon>Pseudomonadati</taxon>
        <taxon>Pseudomonadota</taxon>
        <taxon>Gammaproteobacteria</taxon>
        <taxon>Enterobacterales</taxon>
        <taxon>Enterobacteriaceae</taxon>
        <taxon>Escherichia</taxon>
    </lineage>
</organism>
<reference key="1">
    <citation type="journal article" date="2002" name="Proc. Natl. Acad. Sci. U.S.A.">
        <title>Extensive mosaic structure revealed by the complete genome sequence of uropathogenic Escherichia coli.</title>
        <authorList>
            <person name="Welch R.A."/>
            <person name="Burland V."/>
            <person name="Plunkett G. III"/>
            <person name="Redford P."/>
            <person name="Roesch P."/>
            <person name="Rasko D."/>
            <person name="Buckles E.L."/>
            <person name="Liou S.-R."/>
            <person name="Boutin A."/>
            <person name="Hackett J."/>
            <person name="Stroud D."/>
            <person name="Mayhew G.F."/>
            <person name="Rose D.J."/>
            <person name="Zhou S."/>
            <person name="Schwartz D.C."/>
            <person name="Perna N.T."/>
            <person name="Mobley H.L.T."/>
            <person name="Donnenberg M.S."/>
            <person name="Blattner F.R."/>
        </authorList>
    </citation>
    <scope>NUCLEOTIDE SEQUENCE [LARGE SCALE GENOMIC DNA]</scope>
    <source>
        <strain>CFT073 / ATCC 700928 / UPEC</strain>
    </source>
</reference>
<gene>
    <name type="primary">gnsA</name>
    <name type="ordered locus">c1125</name>
</gene>
<feature type="chain" id="PRO_0000201723" description="Protein GnsA">
    <location>
        <begin position="1"/>
        <end position="57"/>
    </location>
</feature>
<dbReference type="EMBL" id="AE014075">
    <property type="protein sequence ID" value="AAN79593.1"/>
    <property type="molecule type" value="Genomic_DNA"/>
</dbReference>
<dbReference type="RefSeq" id="WP_001019197.1">
    <property type="nucleotide sequence ID" value="NZ_CP051263.1"/>
</dbReference>
<dbReference type="SMR" id="P0AC93"/>
<dbReference type="STRING" id="199310.c1125"/>
<dbReference type="KEGG" id="ecc:c1125"/>
<dbReference type="eggNOG" id="ENOG50332DR">
    <property type="taxonomic scope" value="Bacteria"/>
</dbReference>
<dbReference type="HOGENOM" id="CLU_197432_0_0_6"/>
<dbReference type="BioCyc" id="ECOL199310:C1125-MONOMER"/>
<dbReference type="Proteomes" id="UP000001410">
    <property type="component" value="Chromosome"/>
</dbReference>
<dbReference type="InterPro" id="IPR012563">
    <property type="entry name" value="Gns"/>
</dbReference>
<dbReference type="Pfam" id="PF08178">
    <property type="entry name" value="GnsAB_toxin"/>
    <property type="match status" value="1"/>
</dbReference>
<protein>
    <recommendedName>
        <fullName>Protein GnsA</fullName>
    </recommendedName>
</protein>
<proteinExistence type="inferred from homology"/>
<sequence length="57" mass="6576">MNIEELKKQAETEIADFIAQKIAELNKNTGKEVSEIRFTAREKMTGLESYDVKIKIM</sequence>
<keyword id="KW-1185">Reference proteome</keyword>